<reference key="1">
    <citation type="journal article" date="1999" name="Nature">
        <title>Sequence and analysis of chromosome 4 of the plant Arabidopsis thaliana.</title>
        <authorList>
            <person name="Mayer K.F.X."/>
            <person name="Schueller C."/>
            <person name="Wambutt R."/>
            <person name="Murphy G."/>
            <person name="Volckaert G."/>
            <person name="Pohl T."/>
            <person name="Duesterhoeft A."/>
            <person name="Stiekema W."/>
            <person name="Entian K.-D."/>
            <person name="Terryn N."/>
            <person name="Harris B."/>
            <person name="Ansorge W."/>
            <person name="Brandt P."/>
            <person name="Grivell L.A."/>
            <person name="Rieger M."/>
            <person name="Weichselgartner M."/>
            <person name="de Simone V."/>
            <person name="Obermaier B."/>
            <person name="Mache R."/>
            <person name="Mueller M."/>
            <person name="Kreis M."/>
            <person name="Delseny M."/>
            <person name="Puigdomenech P."/>
            <person name="Watson M."/>
            <person name="Schmidtheini T."/>
            <person name="Reichert B."/>
            <person name="Portetelle D."/>
            <person name="Perez-Alonso M."/>
            <person name="Boutry M."/>
            <person name="Bancroft I."/>
            <person name="Vos P."/>
            <person name="Hoheisel J."/>
            <person name="Zimmermann W."/>
            <person name="Wedler H."/>
            <person name="Ridley P."/>
            <person name="Langham S.-A."/>
            <person name="McCullagh B."/>
            <person name="Bilham L."/>
            <person name="Robben J."/>
            <person name="van der Schueren J."/>
            <person name="Grymonprez B."/>
            <person name="Chuang Y.-J."/>
            <person name="Vandenbussche F."/>
            <person name="Braeken M."/>
            <person name="Weltjens I."/>
            <person name="Voet M."/>
            <person name="Bastiaens I."/>
            <person name="Aert R."/>
            <person name="Defoor E."/>
            <person name="Weitzenegger T."/>
            <person name="Bothe G."/>
            <person name="Ramsperger U."/>
            <person name="Hilbert H."/>
            <person name="Braun M."/>
            <person name="Holzer E."/>
            <person name="Brandt A."/>
            <person name="Peters S."/>
            <person name="van Staveren M."/>
            <person name="Dirkse W."/>
            <person name="Mooijman P."/>
            <person name="Klein Lankhorst R."/>
            <person name="Rose M."/>
            <person name="Hauf J."/>
            <person name="Koetter P."/>
            <person name="Berneiser S."/>
            <person name="Hempel S."/>
            <person name="Feldpausch M."/>
            <person name="Lamberth S."/>
            <person name="Van den Daele H."/>
            <person name="De Keyser A."/>
            <person name="Buysshaert C."/>
            <person name="Gielen J."/>
            <person name="Villarroel R."/>
            <person name="De Clercq R."/>
            <person name="van Montagu M."/>
            <person name="Rogers J."/>
            <person name="Cronin A."/>
            <person name="Quail M.A."/>
            <person name="Bray-Allen S."/>
            <person name="Clark L."/>
            <person name="Doggett J."/>
            <person name="Hall S."/>
            <person name="Kay M."/>
            <person name="Lennard N."/>
            <person name="McLay K."/>
            <person name="Mayes R."/>
            <person name="Pettett A."/>
            <person name="Rajandream M.A."/>
            <person name="Lyne M."/>
            <person name="Benes V."/>
            <person name="Rechmann S."/>
            <person name="Borkova D."/>
            <person name="Bloecker H."/>
            <person name="Scharfe M."/>
            <person name="Grimm M."/>
            <person name="Loehnert T.-H."/>
            <person name="Dose S."/>
            <person name="de Haan M."/>
            <person name="Maarse A.C."/>
            <person name="Schaefer M."/>
            <person name="Mueller-Auer S."/>
            <person name="Gabel C."/>
            <person name="Fuchs M."/>
            <person name="Fartmann B."/>
            <person name="Granderath K."/>
            <person name="Dauner D."/>
            <person name="Herzl A."/>
            <person name="Neumann S."/>
            <person name="Argiriou A."/>
            <person name="Vitale D."/>
            <person name="Liguori R."/>
            <person name="Piravandi E."/>
            <person name="Massenet O."/>
            <person name="Quigley F."/>
            <person name="Clabauld G."/>
            <person name="Muendlein A."/>
            <person name="Felber R."/>
            <person name="Schnabl S."/>
            <person name="Hiller R."/>
            <person name="Schmidt W."/>
            <person name="Lecharny A."/>
            <person name="Aubourg S."/>
            <person name="Chefdor F."/>
            <person name="Cooke R."/>
            <person name="Berger C."/>
            <person name="Monfort A."/>
            <person name="Casacuberta E."/>
            <person name="Gibbons T."/>
            <person name="Weber N."/>
            <person name="Vandenbol M."/>
            <person name="Bargues M."/>
            <person name="Terol J."/>
            <person name="Torres A."/>
            <person name="Perez-Perez A."/>
            <person name="Purnelle B."/>
            <person name="Bent E."/>
            <person name="Johnson S."/>
            <person name="Tacon D."/>
            <person name="Jesse T."/>
            <person name="Heijnen L."/>
            <person name="Schwarz S."/>
            <person name="Scholler P."/>
            <person name="Heber S."/>
            <person name="Francs P."/>
            <person name="Bielke C."/>
            <person name="Frishman D."/>
            <person name="Haase D."/>
            <person name="Lemcke K."/>
            <person name="Mewes H.-W."/>
            <person name="Stocker S."/>
            <person name="Zaccaria P."/>
            <person name="Bevan M."/>
            <person name="Wilson R.K."/>
            <person name="de la Bastide M."/>
            <person name="Habermann K."/>
            <person name="Parnell L."/>
            <person name="Dedhia N."/>
            <person name="Gnoj L."/>
            <person name="Schutz K."/>
            <person name="Huang E."/>
            <person name="Spiegel L."/>
            <person name="Sekhon M."/>
            <person name="Murray J."/>
            <person name="Sheet P."/>
            <person name="Cordes M."/>
            <person name="Abu-Threideh J."/>
            <person name="Stoneking T."/>
            <person name="Kalicki J."/>
            <person name="Graves T."/>
            <person name="Harmon G."/>
            <person name="Edwards J."/>
            <person name="Latreille P."/>
            <person name="Courtney L."/>
            <person name="Cloud J."/>
            <person name="Abbott A."/>
            <person name="Scott K."/>
            <person name="Johnson D."/>
            <person name="Minx P."/>
            <person name="Bentley D."/>
            <person name="Fulton B."/>
            <person name="Miller N."/>
            <person name="Greco T."/>
            <person name="Kemp K."/>
            <person name="Kramer J."/>
            <person name="Fulton L."/>
            <person name="Mardis E."/>
            <person name="Dante M."/>
            <person name="Pepin K."/>
            <person name="Hillier L.W."/>
            <person name="Nelson J."/>
            <person name="Spieth J."/>
            <person name="Ryan E."/>
            <person name="Andrews S."/>
            <person name="Geisel C."/>
            <person name="Layman D."/>
            <person name="Du H."/>
            <person name="Ali J."/>
            <person name="Berghoff A."/>
            <person name="Jones K."/>
            <person name="Drone K."/>
            <person name="Cotton M."/>
            <person name="Joshu C."/>
            <person name="Antonoiu B."/>
            <person name="Zidanic M."/>
            <person name="Strong C."/>
            <person name="Sun H."/>
            <person name="Lamar B."/>
            <person name="Yordan C."/>
            <person name="Ma P."/>
            <person name="Zhong J."/>
            <person name="Preston R."/>
            <person name="Vil D."/>
            <person name="Shekher M."/>
            <person name="Matero A."/>
            <person name="Shah R."/>
            <person name="Swaby I.K."/>
            <person name="O'Shaughnessy A."/>
            <person name="Rodriguez M."/>
            <person name="Hoffman J."/>
            <person name="Till S."/>
            <person name="Granat S."/>
            <person name="Shohdy N."/>
            <person name="Hasegawa A."/>
            <person name="Hameed A."/>
            <person name="Lodhi M."/>
            <person name="Johnson A."/>
            <person name="Chen E."/>
            <person name="Marra M.A."/>
            <person name="Martienssen R."/>
            <person name="McCombie W.R."/>
        </authorList>
    </citation>
    <scope>NUCLEOTIDE SEQUENCE [LARGE SCALE GENOMIC DNA]</scope>
    <source>
        <strain>cv. Columbia</strain>
    </source>
</reference>
<reference key="2">
    <citation type="journal article" date="2017" name="Plant J.">
        <title>Araport11: a complete reannotation of the Arabidopsis thaliana reference genome.</title>
        <authorList>
            <person name="Cheng C.Y."/>
            <person name="Krishnakumar V."/>
            <person name="Chan A.P."/>
            <person name="Thibaud-Nissen F."/>
            <person name="Schobel S."/>
            <person name="Town C.D."/>
        </authorList>
    </citation>
    <scope>GENOME REANNOTATION</scope>
    <source>
        <strain>cv. Columbia</strain>
    </source>
</reference>
<reference key="3">
    <citation type="journal article" date="2003" name="Science">
        <title>Empirical analysis of transcriptional activity in the Arabidopsis genome.</title>
        <authorList>
            <person name="Yamada K."/>
            <person name="Lim J."/>
            <person name="Dale J.M."/>
            <person name="Chen H."/>
            <person name="Shinn P."/>
            <person name="Palm C.J."/>
            <person name="Southwick A.M."/>
            <person name="Wu H.C."/>
            <person name="Kim C.J."/>
            <person name="Nguyen M."/>
            <person name="Pham P.K."/>
            <person name="Cheuk R.F."/>
            <person name="Karlin-Newmann G."/>
            <person name="Liu S.X."/>
            <person name="Lam B."/>
            <person name="Sakano H."/>
            <person name="Wu T."/>
            <person name="Yu G."/>
            <person name="Miranda M."/>
            <person name="Quach H.L."/>
            <person name="Tripp M."/>
            <person name="Chang C.H."/>
            <person name="Lee J.M."/>
            <person name="Toriumi M.J."/>
            <person name="Chan M.M."/>
            <person name="Tang C.C."/>
            <person name="Onodera C.S."/>
            <person name="Deng J.M."/>
            <person name="Akiyama K."/>
            <person name="Ansari Y."/>
            <person name="Arakawa T."/>
            <person name="Banh J."/>
            <person name="Banno F."/>
            <person name="Bowser L."/>
            <person name="Brooks S.Y."/>
            <person name="Carninci P."/>
            <person name="Chao Q."/>
            <person name="Choy N."/>
            <person name="Enju A."/>
            <person name="Goldsmith A.D."/>
            <person name="Gurjal M."/>
            <person name="Hansen N.F."/>
            <person name="Hayashizaki Y."/>
            <person name="Johnson-Hopson C."/>
            <person name="Hsuan V.W."/>
            <person name="Iida K."/>
            <person name="Karnes M."/>
            <person name="Khan S."/>
            <person name="Koesema E."/>
            <person name="Ishida J."/>
            <person name="Jiang P.X."/>
            <person name="Jones T."/>
            <person name="Kawai J."/>
            <person name="Kamiya A."/>
            <person name="Meyers C."/>
            <person name="Nakajima M."/>
            <person name="Narusaka M."/>
            <person name="Seki M."/>
            <person name="Sakurai T."/>
            <person name="Satou M."/>
            <person name="Tamse R."/>
            <person name="Vaysberg M."/>
            <person name="Wallender E.K."/>
            <person name="Wong C."/>
            <person name="Yamamura Y."/>
            <person name="Yuan S."/>
            <person name="Shinozaki K."/>
            <person name="Davis R.W."/>
            <person name="Theologis A."/>
            <person name="Ecker J.R."/>
        </authorList>
    </citation>
    <scope>NUCLEOTIDE SEQUENCE [LARGE SCALE MRNA]</scope>
    <source>
        <strain>cv. Columbia</strain>
    </source>
</reference>
<reference key="4">
    <citation type="journal article" date="2004" name="J. Bacteriol.">
        <title>Molecular cloning and characterization of Bifidobacterium bifidum 1,2-alpha-L-fucosidase (AfcA), a novel inverting glycosidase (glycoside hydrolase family 95).</title>
        <authorList>
            <person name="Katayama T."/>
            <person name="Sakuma A."/>
            <person name="Kimura T."/>
            <person name="Makimura Y."/>
            <person name="Hiratake J."/>
            <person name="Sakata K."/>
            <person name="Yamanoi T."/>
            <person name="Kumagai H."/>
            <person name="Yamamoto K."/>
        </authorList>
    </citation>
    <scope>IDENTIFICATION</scope>
</reference>
<reference key="5">
    <citation type="journal article" date="2008" name="Phytochemistry">
        <title>Identification of an Arabidopsis gene encoding a GH95 alpha1,2-fucosidase active on xyloglucan oligo- and polysaccharides.</title>
        <authorList>
            <person name="Leonard R."/>
            <person name="Pabst M."/>
            <person name="Bondili J.S."/>
            <person name="Chambat G."/>
            <person name="Veit C."/>
            <person name="Strasser R."/>
            <person name="Altmann F."/>
        </authorList>
    </citation>
    <scope>FUNCTION</scope>
    <scope>CATALYTIC ACTIVITY</scope>
    <scope>BIOPHYSICOCHEMICAL PROPERTIES</scope>
</reference>
<reference key="6">
    <citation type="journal article" date="2011" name="Plant Cell">
        <title>AXY8 encodes an alpha-fucosidase, underscoring the importance of apoplastic metabolism on the fine structure of Arabidopsis cell wall polysaccharides.</title>
        <authorList>
            <person name="Gunl M."/>
            <person name="Neumetzler L."/>
            <person name="Kraemer F."/>
            <person name="de Souza A."/>
            <person name="Schultink A."/>
            <person name="Pena M."/>
            <person name="York W.S."/>
            <person name="Pauly M."/>
        </authorList>
    </citation>
    <scope>FUNCTION</scope>
    <scope>DISRUPTION PHENOTYPE</scope>
    <scope>MUTAGENESIS OF CYS-511 AND PRO-562</scope>
    <scope>TISSUE SPECIFICITY</scope>
    <scope>SUBCELLULAR LOCATION</scope>
    <source>
        <strain>cv. Columbia</strain>
    </source>
</reference>
<evidence type="ECO:0000255" key="1"/>
<evidence type="ECO:0000269" key="2">
    <source>
    </source>
</evidence>
<evidence type="ECO:0000269" key="3">
    <source>
    </source>
</evidence>
<evidence type="ECO:0000305" key="4"/>
<name>FUCO2_ARATH</name>
<organism>
    <name type="scientific">Arabidopsis thaliana</name>
    <name type="common">Mouse-ear cress</name>
    <dbReference type="NCBI Taxonomy" id="3702"/>
    <lineage>
        <taxon>Eukaryota</taxon>
        <taxon>Viridiplantae</taxon>
        <taxon>Streptophyta</taxon>
        <taxon>Embryophyta</taxon>
        <taxon>Tracheophyta</taxon>
        <taxon>Spermatophyta</taxon>
        <taxon>Magnoliopsida</taxon>
        <taxon>eudicotyledons</taxon>
        <taxon>Gunneridae</taxon>
        <taxon>Pentapetalae</taxon>
        <taxon>rosids</taxon>
        <taxon>malvids</taxon>
        <taxon>Brassicales</taxon>
        <taxon>Brassicaceae</taxon>
        <taxon>Camelineae</taxon>
        <taxon>Arabidopsis</taxon>
    </lineage>
</organism>
<dbReference type="EC" id="3.2.1.51"/>
<dbReference type="EMBL" id="AL035521">
    <property type="protein sequence ID" value="CAB36703.1"/>
    <property type="status" value="ALT_SEQ"/>
    <property type="molecule type" value="Genomic_DNA"/>
</dbReference>
<dbReference type="EMBL" id="AL161585">
    <property type="protein sequence ID" value="CAB80143.1"/>
    <property type="status" value="ALT_SEQ"/>
    <property type="molecule type" value="Genomic_DNA"/>
</dbReference>
<dbReference type="EMBL" id="CP002687">
    <property type="protein sequence ID" value="AEE86349.1"/>
    <property type="molecule type" value="Genomic_DNA"/>
</dbReference>
<dbReference type="EMBL" id="AY125494">
    <property type="protein sequence ID" value="AAM78086.1"/>
    <property type="molecule type" value="mRNA"/>
</dbReference>
<dbReference type="EMBL" id="BT002722">
    <property type="protein sequence ID" value="AAO11638.1"/>
    <property type="molecule type" value="mRNA"/>
</dbReference>
<dbReference type="PIR" id="T04772">
    <property type="entry name" value="T04772"/>
</dbReference>
<dbReference type="RefSeq" id="NP_195152.2">
    <property type="nucleotide sequence ID" value="NM_119590.4"/>
</dbReference>
<dbReference type="SMR" id="Q8L7W8"/>
<dbReference type="FunCoup" id="Q8L7W8">
    <property type="interactions" value="38"/>
</dbReference>
<dbReference type="STRING" id="3702.Q8L7W8"/>
<dbReference type="CAZy" id="GH95">
    <property type="family name" value="Glycoside Hydrolase Family 95"/>
</dbReference>
<dbReference type="GlyCosmos" id="Q8L7W8">
    <property type="glycosylation" value="4 sites, No reported glycans"/>
</dbReference>
<dbReference type="GlyGen" id="Q8L7W8">
    <property type="glycosylation" value="4 sites"/>
</dbReference>
<dbReference type="PaxDb" id="3702-AT4G34260.1"/>
<dbReference type="ProteomicsDB" id="230554"/>
<dbReference type="EnsemblPlants" id="AT4G34260.1">
    <property type="protein sequence ID" value="AT4G34260.1"/>
    <property type="gene ID" value="AT4G34260"/>
</dbReference>
<dbReference type="GeneID" id="829575"/>
<dbReference type="Gramene" id="AT4G34260.1">
    <property type="protein sequence ID" value="AT4G34260.1"/>
    <property type="gene ID" value="AT4G34260"/>
</dbReference>
<dbReference type="KEGG" id="ath:AT4G34260"/>
<dbReference type="Araport" id="AT4G34260"/>
<dbReference type="TAIR" id="AT4G34260">
    <property type="gene designation" value="FUC95A"/>
</dbReference>
<dbReference type="eggNOG" id="ENOG502QQ9E">
    <property type="taxonomic scope" value="Eukaryota"/>
</dbReference>
<dbReference type="HOGENOM" id="CLU_004617_2_2_1"/>
<dbReference type="InParanoid" id="Q8L7W8"/>
<dbReference type="OMA" id="KVWRGAC"/>
<dbReference type="PhylomeDB" id="Q8L7W8"/>
<dbReference type="BioCyc" id="ARA:AT4G34260-MONOMER"/>
<dbReference type="PRO" id="PR:Q8L7W8"/>
<dbReference type="Proteomes" id="UP000006548">
    <property type="component" value="Chromosome 4"/>
</dbReference>
<dbReference type="ExpressionAtlas" id="Q8L7W8">
    <property type="expression patterns" value="baseline and differential"/>
</dbReference>
<dbReference type="GO" id="GO:0048046">
    <property type="term" value="C:apoplast"/>
    <property type="evidence" value="ECO:0000314"/>
    <property type="project" value="TAIR"/>
</dbReference>
<dbReference type="GO" id="GO:0047513">
    <property type="term" value="F:1,2-alpha-L-fucosidase activity"/>
    <property type="evidence" value="ECO:0000314"/>
    <property type="project" value="TAIR"/>
</dbReference>
<dbReference type="GO" id="GO:0005975">
    <property type="term" value="P:carbohydrate metabolic process"/>
    <property type="evidence" value="ECO:0007669"/>
    <property type="project" value="InterPro"/>
</dbReference>
<dbReference type="FunFam" id="1.50.10.10:FF:000028">
    <property type="entry name" value="Alpha-L-fucosidase 2"/>
    <property type="match status" value="1"/>
</dbReference>
<dbReference type="Gene3D" id="1.50.10.10">
    <property type="match status" value="1"/>
</dbReference>
<dbReference type="InterPro" id="IPR008928">
    <property type="entry name" value="6-hairpin_glycosidase_sf"/>
</dbReference>
<dbReference type="InterPro" id="IPR012341">
    <property type="entry name" value="6hp_glycosidase-like_sf"/>
</dbReference>
<dbReference type="InterPro" id="IPR049053">
    <property type="entry name" value="AFCA-like_C"/>
</dbReference>
<dbReference type="InterPro" id="IPR016518">
    <property type="entry name" value="Alpha-L-fucosidase"/>
</dbReference>
<dbReference type="InterPro" id="IPR054363">
    <property type="entry name" value="GH95_cat"/>
</dbReference>
<dbReference type="InterPro" id="IPR027414">
    <property type="entry name" value="GH95_N_dom"/>
</dbReference>
<dbReference type="PANTHER" id="PTHR31084">
    <property type="entry name" value="ALPHA-L-FUCOSIDASE 2"/>
    <property type="match status" value="1"/>
</dbReference>
<dbReference type="PANTHER" id="PTHR31084:SF0">
    <property type="entry name" value="ALPHA-L-FUCOSIDASE 2"/>
    <property type="match status" value="1"/>
</dbReference>
<dbReference type="Pfam" id="PF14498">
    <property type="entry name" value="Glyco_hyd_65N_2"/>
    <property type="match status" value="1"/>
</dbReference>
<dbReference type="Pfam" id="PF21307">
    <property type="entry name" value="Glyco_hydro_95_C"/>
    <property type="match status" value="1"/>
</dbReference>
<dbReference type="Pfam" id="PF22124">
    <property type="entry name" value="Glyco_hydro_95_cat"/>
    <property type="match status" value="1"/>
</dbReference>
<dbReference type="PIRSF" id="PIRSF007663">
    <property type="entry name" value="UCP007663"/>
    <property type="match status" value="1"/>
</dbReference>
<dbReference type="SUPFAM" id="SSF48208">
    <property type="entry name" value="Six-hairpin glycosidases"/>
    <property type="match status" value="1"/>
</dbReference>
<accession>Q8L7W8</accession>
<accession>Q9SYZ1</accession>
<feature type="signal peptide" evidence="1">
    <location>
        <begin position="1"/>
        <end position="27"/>
    </location>
</feature>
<feature type="chain" id="PRO_0000289877" description="Alpha-L-fucosidase 2">
    <location>
        <begin position="28"/>
        <end position="843"/>
    </location>
</feature>
<feature type="glycosylation site" description="N-linked (GlcNAc...) asparagine" evidence="1">
    <location>
        <position position="62"/>
    </location>
</feature>
<feature type="glycosylation site" description="N-linked (GlcNAc...) asparagine" evidence="1">
    <location>
        <position position="253"/>
    </location>
</feature>
<feature type="glycosylation site" description="N-linked (GlcNAc...) asparagine" evidence="1">
    <location>
        <position position="365"/>
    </location>
</feature>
<feature type="glycosylation site" description="N-linked (GlcNAc...) asparagine" evidence="1">
    <location>
        <position position="605"/>
    </location>
</feature>
<feature type="mutagenesis site" description="In axy8-4; Loss of activity." evidence="3">
    <original>C</original>
    <variation>Y</variation>
    <location>
        <position position="511"/>
    </location>
</feature>
<feature type="mutagenesis site" description="In axy8-3; Loss of activity." evidence="3">
    <original>P</original>
    <variation>L</variation>
    <location>
        <position position="562"/>
    </location>
</feature>
<keyword id="KW-0052">Apoplast</keyword>
<keyword id="KW-0325">Glycoprotein</keyword>
<keyword id="KW-0326">Glycosidase</keyword>
<keyword id="KW-0378">Hydrolase</keyword>
<keyword id="KW-1185">Reference proteome</keyword>
<keyword id="KW-0964">Secreted</keyword>
<keyword id="KW-0732">Signal</keyword>
<proteinExistence type="evidence at protein level"/>
<protein>
    <recommendedName>
        <fullName>Alpha-L-fucosidase 2</fullName>
        <ecNumber>3.2.1.51</ecNumber>
    </recommendedName>
    <alternativeName>
        <fullName>Alpha-1,2-fucosidase 2</fullName>
    </alternativeName>
    <alternativeName>
        <fullName>Alpha-L-fucosidase 95A</fullName>
        <shortName>AtFuc95A</shortName>
    </alternativeName>
    <alternativeName>
        <fullName>Alpha-L-fucoside fucohydrolase 2</fullName>
    </alternativeName>
    <alternativeName>
        <fullName>Protein ALTERED XYLOGLUCAN 8</fullName>
    </alternativeName>
</protein>
<sequence length="843" mass="93725">MAEKSSFFVHFSCLLLLLTIIITCGEGVRNPVRPRSSERRALMDGQDLSRPLKLTFGGPSRNWTDAIPIGNGRLGATIWGGVSSEILNINEDTIWTGVPADYTNQKAPEALAEVRRLVDERNYAEATSEAVKLSGQPSDVYQIVGDLNLEFDSSHRKYTQASYRRELDLETAVAKVSYSVGAVDFSREFFASNPDQVIIAKIYASKPGSLSFKVSFDSELHHHSETNPKANQILMRGSCRPKRLPVNLKKSINATNIPYDDHKGLQFASILEVRVSNGGSVSSLGGKKLSVEKADWAVLLLAASSNFDGPFTMPVDSKIDPAKECVNRISSVQKYSYSDLYARHLGDYQKLFNRVSLHLSGSSTNETVQQATSTAERVRSFKTDQDPSLVELLFQYGRYLLISSSRPGTQVANLQGIWNRDIQPPWDGAPHLNINLQMNYWHSLPGNIRECQEPLFDYMSALAINGRKTAQVNYGASGWVAHQVSDIWAKTSPDRGEAVWALWPMGGAWLCTHAWEHYTYTMDKEFLKKKGYPLLEGCTSFLLDWLIKGKDGFLQTNPSTSPEHMFTAPIGKPASVSYSSTMDIAIIKEVFADIVSASEILGKTNDTLIGKVIAAQAKLPPTRISKDGSIREWAEDFEDPEVHHRHVSHLFGLFPGHTITVEKSPELAKAVEATLKKRGEEGPGWSTTWKAALWARLHNSEHAYRMVTHIFDLVDPLNERNYEGGLYSNMFTAHPPFQIDANFGFAAAVAEMLVQSTTKDLYLLPALPADKWPNGIVNGLRARGGVTVSIKWMEGNLVEFGLWSEQIVSTRIVYRGISAAAELLPGKVFTFDKDLRCIRTDKL</sequence>
<comment type="function">
    <text evidence="2 3">Hydrolyzes alpha-1,2-linked fucose. Also active on fucosylated xyloglucan oligosaccharides. No activity with 3-fucosyllactose, p-nitrophenyl-alpha-I-fucopyranoside, lacto-N-fucopentaose II, lacto-N-fucopentaose III or alpha 1,6-fucosylated chitopentaose. Involved in apoplastic xyloglucan metabolism.</text>
</comment>
<comment type="catalytic activity">
    <reaction evidence="2">
        <text>an alpha-L-fucoside + H2O = L-fucose + an alcohol</text>
        <dbReference type="Rhea" id="RHEA:12288"/>
        <dbReference type="ChEBI" id="CHEBI:2181"/>
        <dbReference type="ChEBI" id="CHEBI:15377"/>
        <dbReference type="ChEBI" id="CHEBI:28349"/>
        <dbReference type="ChEBI" id="CHEBI:30879"/>
        <dbReference type="EC" id="3.2.1.51"/>
    </reaction>
</comment>
<comment type="biophysicochemical properties">
    <kinetics>
        <KM evidence="2">0.65 mM for 2-fucosyllactose</KM>
        <KM evidence="2">1.5 mM for polymeric xyloglucan</KM>
    </kinetics>
    <phDependence>
        <text evidence="2">Optimum pH is 5.0.</text>
    </phDependence>
</comment>
<comment type="subcellular location">
    <subcellularLocation>
        <location evidence="3">Secreted</location>
        <location evidence="3">Extracellular space</location>
        <location evidence="3">Apoplast</location>
    </subcellularLocation>
</comment>
<comment type="tissue specificity">
    <text evidence="3">Ubiquitous. Highest expression in vascular tissues, leaf trichomes, root elongation zone and emerging lateral roots.</text>
</comment>
<comment type="disruption phenotype">
    <text evidence="3">No visible phenotype. Higher abundance of fucosylated oligosaccharides and presence of unusual oligosaccharides.</text>
</comment>
<comment type="similarity">
    <text evidence="4">Belongs to the glycosyl hydrolase 95 family.</text>
</comment>
<comment type="sequence caution" evidence="4">
    <conflict type="erroneous gene model prediction">
        <sequence resource="EMBL-CDS" id="CAB36703"/>
    </conflict>
</comment>
<comment type="sequence caution" evidence="4">
    <conflict type="erroneous gene model prediction">
        <sequence resource="EMBL-CDS" id="CAB80143"/>
    </conflict>
</comment>
<gene>
    <name type="primary">FUC95A</name>
    <name type="synonym">AXY8</name>
    <name type="ordered locus">At4g34260</name>
    <name type="ORF">F10M10.30</name>
</gene>